<feature type="chain" id="PRO_0000311558" description="Iron-sulfur cluster insertion protein ErpA">
    <location>
        <begin position="1"/>
        <end position="116"/>
    </location>
</feature>
<feature type="binding site" evidence="1">
    <location>
        <position position="44"/>
    </location>
    <ligand>
        <name>iron-sulfur cluster</name>
        <dbReference type="ChEBI" id="CHEBI:30408"/>
    </ligand>
</feature>
<feature type="binding site" evidence="1">
    <location>
        <position position="108"/>
    </location>
    <ligand>
        <name>iron-sulfur cluster</name>
        <dbReference type="ChEBI" id="CHEBI:30408"/>
    </ligand>
</feature>
<feature type="binding site" evidence="1">
    <location>
        <position position="110"/>
    </location>
    <ligand>
        <name>iron-sulfur cluster</name>
        <dbReference type="ChEBI" id="CHEBI:30408"/>
    </ligand>
</feature>
<sequence>MTEQADAAMPIQFTDAAAAKVKGLLEEEQNPALKLRVYVTGGGCSGFQYGFTFDEKVNEGDFTVEKQGVQLVVDPMSLQYLVGGEVDYTSGLEGSRFFVKNPNATTTCGCGASFSV</sequence>
<accession>A1RMG3</accession>
<protein>
    <recommendedName>
        <fullName evidence="1">Iron-sulfur cluster insertion protein ErpA</fullName>
    </recommendedName>
</protein>
<name>ERPA_SHESW</name>
<keyword id="KW-0408">Iron</keyword>
<keyword id="KW-0411">Iron-sulfur</keyword>
<keyword id="KW-0479">Metal-binding</keyword>
<reference key="1">
    <citation type="submission" date="2006-12" db="EMBL/GenBank/DDBJ databases">
        <title>Complete sequence of Shewanella sp. W3-18-1.</title>
        <authorList>
            <consortium name="US DOE Joint Genome Institute"/>
            <person name="Copeland A."/>
            <person name="Lucas S."/>
            <person name="Lapidus A."/>
            <person name="Barry K."/>
            <person name="Detter J.C."/>
            <person name="Glavina del Rio T."/>
            <person name="Hammon N."/>
            <person name="Israni S."/>
            <person name="Dalin E."/>
            <person name="Tice H."/>
            <person name="Pitluck S."/>
            <person name="Chain P."/>
            <person name="Malfatti S."/>
            <person name="Shin M."/>
            <person name="Vergez L."/>
            <person name="Schmutz J."/>
            <person name="Larimer F."/>
            <person name="Land M."/>
            <person name="Hauser L."/>
            <person name="Kyrpides N."/>
            <person name="Lykidis A."/>
            <person name="Tiedje J."/>
            <person name="Richardson P."/>
        </authorList>
    </citation>
    <scope>NUCLEOTIDE SEQUENCE [LARGE SCALE GENOMIC DNA]</scope>
    <source>
        <strain>W3-18-1</strain>
    </source>
</reference>
<gene>
    <name evidence="1" type="primary">erpA</name>
    <name type="ordered locus">Sputw3181_3041</name>
</gene>
<dbReference type="EMBL" id="CP000503">
    <property type="protein sequence ID" value="ABM25858.1"/>
    <property type="molecule type" value="Genomic_DNA"/>
</dbReference>
<dbReference type="RefSeq" id="WP_011790310.1">
    <property type="nucleotide sequence ID" value="NC_008750.1"/>
</dbReference>
<dbReference type="SMR" id="A1RMG3"/>
<dbReference type="GeneID" id="67442640"/>
<dbReference type="KEGG" id="shw:Sputw3181_3041"/>
<dbReference type="HOGENOM" id="CLU_069054_5_3_6"/>
<dbReference type="Proteomes" id="UP000002597">
    <property type="component" value="Chromosome"/>
</dbReference>
<dbReference type="GO" id="GO:0005829">
    <property type="term" value="C:cytosol"/>
    <property type="evidence" value="ECO:0007669"/>
    <property type="project" value="TreeGrafter"/>
</dbReference>
<dbReference type="GO" id="GO:0051537">
    <property type="term" value="F:2 iron, 2 sulfur cluster binding"/>
    <property type="evidence" value="ECO:0007669"/>
    <property type="project" value="TreeGrafter"/>
</dbReference>
<dbReference type="GO" id="GO:0051539">
    <property type="term" value="F:4 iron, 4 sulfur cluster binding"/>
    <property type="evidence" value="ECO:0007669"/>
    <property type="project" value="TreeGrafter"/>
</dbReference>
<dbReference type="GO" id="GO:0005506">
    <property type="term" value="F:iron ion binding"/>
    <property type="evidence" value="ECO:0007669"/>
    <property type="project" value="UniProtKB-UniRule"/>
</dbReference>
<dbReference type="GO" id="GO:0016226">
    <property type="term" value="P:iron-sulfur cluster assembly"/>
    <property type="evidence" value="ECO:0007669"/>
    <property type="project" value="UniProtKB-UniRule"/>
</dbReference>
<dbReference type="FunFam" id="2.60.300.12:FF:000002">
    <property type="entry name" value="Iron-sulfur cluster insertion protein ErpA"/>
    <property type="match status" value="1"/>
</dbReference>
<dbReference type="Gene3D" id="2.60.300.12">
    <property type="entry name" value="HesB-like domain"/>
    <property type="match status" value="1"/>
</dbReference>
<dbReference type="HAMAP" id="MF_01380">
    <property type="entry name" value="Fe_S_insert_ErpA"/>
    <property type="match status" value="1"/>
</dbReference>
<dbReference type="InterPro" id="IPR000361">
    <property type="entry name" value="FeS_biogenesis"/>
</dbReference>
<dbReference type="InterPro" id="IPR016092">
    <property type="entry name" value="FeS_cluster_insertion"/>
</dbReference>
<dbReference type="InterPro" id="IPR017870">
    <property type="entry name" value="FeS_cluster_insertion_CS"/>
</dbReference>
<dbReference type="InterPro" id="IPR023063">
    <property type="entry name" value="FeS_cluster_insertion_RrpA"/>
</dbReference>
<dbReference type="InterPro" id="IPR035903">
    <property type="entry name" value="HesB-like_dom_sf"/>
</dbReference>
<dbReference type="NCBIfam" id="TIGR00049">
    <property type="entry name" value="iron-sulfur cluster assembly accessory protein"/>
    <property type="match status" value="1"/>
</dbReference>
<dbReference type="NCBIfam" id="NF010147">
    <property type="entry name" value="PRK13623.1"/>
    <property type="match status" value="1"/>
</dbReference>
<dbReference type="PANTHER" id="PTHR43011">
    <property type="entry name" value="IRON-SULFUR CLUSTER ASSEMBLY 2 HOMOLOG, MITOCHONDRIAL"/>
    <property type="match status" value="1"/>
</dbReference>
<dbReference type="PANTHER" id="PTHR43011:SF1">
    <property type="entry name" value="IRON-SULFUR CLUSTER ASSEMBLY 2 HOMOLOG, MITOCHONDRIAL"/>
    <property type="match status" value="1"/>
</dbReference>
<dbReference type="Pfam" id="PF01521">
    <property type="entry name" value="Fe-S_biosyn"/>
    <property type="match status" value="1"/>
</dbReference>
<dbReference type="SUPFAM" id="SSF89360">
    <property type="entry name" value="HesB-like domain"/>
    <property type="match status" value="1"/>
</dbReference>
<dbReference type="PROSITE" id="PS01152">
    <property type="entry name" value="HESB"/>
    <property type="match status" value="1"/>
</dbReference>
<comment type="function">
    <text evidence="1">Required for insertion of 4Fe-4S clusters for at least IspG.</text>
</comment>
<comment type="cofactor">
    <cofactor evidence="1">
        <name>iron-sulfur cluster</name>
        <dbReference type="ChEBI" id="CHEBI:30408"/>
    </cofactor>
    <text evidence="1">Binds 1 iron-sulfur cluster per subunit.</text>
</comment>
<comment type="subunit">
    <text evidence="1">Homodimer.</text>
</comment>
<comment type="similarity">
    <text evidence="1">Belongs to the HesB/IscA family.</text>
</comment>
<organism>
    <name type="scientific">Shewanella sp. (strain W3-18-1)</name>
    <dbReference type="NCBI Taxonomy" id="351745"/>
    <lineage>
        <taxon>Bacteria</taxon>
        <taxon>Pseudomonadati</taxon>
        <taxon>Pseudomonadota</taxon>
        <taxon>Gammaproteobacteria</taxon>
        <taxon>Alteromonadales</taxon>
        <taxon>Shewanellaceae</taxon>
        <taxon>Shewanella</taxon>
    </lineage>
</organism>
<evidence type="ECO:0000255" key="1">
    <source>
        <dbReference type="HAMAP-Rule" id="MF_01380"/>
    </source>
</evidence>
<proteinExistence type="inferred from homology"/>